<gene>
    <name evidence="1" type="primary">pus10</name>
    <name type="ordered locus">APE_0546.1</name>
</gene>
<evidence type="ECO:0000255" key="1">
    <source>
        <dbReference type="HAMAP-Rule" id="MF_01893"/>
    </source>
</evidence>
<comment type="function">
    <text evidence="1">Responsible for synthesis of pseudouridine from uracil-54 and uracil-55 in the psi GC loop of transfer RNAs.</text>
</comment>
<comment type="catalytic activity">
    <reaction evidence="1">
        <text>uridine(54) in tRNA = pseudouridine(54) in tRNA</text>
        <dbReference type="Rhea" id="RHEA:57876"/>
        <dbReference type="Rhea" id="RHEA-COMP:10193"/>
        <dbReference type="Rhea" id="RHEA-COMP:14141"/>
        <dbReference type="ChEBI" id="CHEBI:65314"/>
        <dbReference type="ChEBI" id="CHEBI:65315"/>
    </reaction>
</comment>
<comment type="catalytic activity">
    <reaction evidence="1">
        <text>uridine(55) in tRNA = pseudouridine(55) in tRNA</text>
        <dbReference type="Rhea" id="RHEA:42532"/>
        <dbReference type="Rhea" id="RHEA-COMP:10101"/>
        <dbReference type="Rhea" id="RHEA-COMP:10102"/>
        <dbReference type="ChEBI" id="CHEBI:65314"/>
        <dbReference type="ChEBI" id="CHEBI:65315"/>
        <dbReference type="EC" id="5.4.99.25"/>
    </reaction>
</comment>
<comment type="similarity">
    <text evidence="1">Belongs to the pseudouridine synthase Pus10 family.</text>
</comment>
<reference key="1">
    <citation type="journal article" date="1999" name="DNA Res.">
        <title>Complete genome sequence of an aerobic hyper-thermophilic crenarchaeon, Aeropyrum pernix K1.</title>
        <authorList>
            <person name="Kawarabayasi Y."/>
            <person name="Hino Y."/>
            <person name="Horikawa H."/>
            <person name="Yamazaki S."/>
            <person name="Haikawa Y."/>
            <person name="Jin-no K."/>
            <person name="Takahashi M."/>
            <person name="Sekine M."/>
            <person name="Baba S."/>
            <person name="Ankai A."/>
            <person name="Kosugi H."/>
            <person name="Hosoyama A."/>
            <person name="Fukui S."/>
            <person name="Nagai Y."/>
            <person name="Nishijima K."/>
            <person name="Nakazawa H."/>
            <person name="Takamiya M."/>
            <person name="Masuda S."/>
            <person name="Funahashi T."/>
            <person name="Tanaka T."/>
            <person name="Kudoh Y."/>
            <person name="Yamazaki J."/>
            <person name="Kushida N."/>
            <person name="Oguchi A."/>
            <person name="Aoki K."/>
            <person name="Kubota K."/>
            <person name="Nakamura Y."/>
            <person name="Nomura N."/>
            <person name="Sako Y."/>
            <person name="Kikuchi H."/>
        </authorList>
    </citation>
    <scope>NUCLEOTIDE SEQUENCE [LARGE SCALE GENOMIC DNA]</scope>
    <source>
        <strain>ATCC 700893 / DSM 11879 / JCM 9820 / NBRC 100138 / K1</strain>
    </source>
</reference>
<keyword id="KW-0413">Isomerase</keyword>
<keyword id="KW-1185">Reference proteome</keyword>
<keyword id="KW-0694">RNA-binding</keyword>
<keyword id="KW-0819">tRNA processing</keyword>
<protein>
    <recommendedName>
        <fullName evidence="1">tRNA pseudouridine synthase Pus10</fullName>
        <ecNumber evidence="1">5.4.99.25</ecNumber>
    </recommendedName>
    <alternativeName>
        <fullName evidence="1">tRNA pseudouridine 54/55 synthase</fullName>
        <shortName evidence="1">Psi54/55 synthase</shortName>
    </alternativeName>
</protein>
<dbReference type="EC" id="5.4.99.25" evidence="1"/>
<dbReference type="EMBL" id="BA000002">
    <property type="protein sequence ID" value="BAA79514.2"/>
    <property type="molecule type" value="Genomic_DNA"/>
</dbReference>
<dbReference type="PIR" id="B72639">
    <property type="entry name" value="B72639"/>
</dbReference>
<dbReference type="RefSeq" id="WP_010865826.1">
    <property type="nucleotide sequence ID" value="NC_000854.2"/>
</dbReference>
<dbReference type="SMR" id="Q9YEN2"/>
<dbReference type="STRING" id="272557.APE_0546.1"/>
<dbReference type="EnsemblBacteria" id="BAA79514">
    <property type="protein sequence ID" value="BAA79514"/>
    <property type="gene ID" value="APE_0546.1"/>
</dbReference>
<dbReference type="GeneID" id="1444718"/>
<dbReference type="KEGG" id="ape:APE_0546.1"/>
<dbReference type="PATRIC" id="fig|272557.25.peg.411"/>
<dbReference type="eggNOG" id="arCOG01015">
    <property type="taxonomic scope" value="Archaea"/>
</dbReference>
<dbReference type="Proteomes" id="UP000002518">
    <property type="component" value="Chromosome"/>
</dbReference>
<dbReference type="GO" id="GO:0000049">
    <property type="term" value="F:tRNA binding"/>
    <property type="evidence" value="ECO:0007669"/>
    <property type="project" value="InterPro"/>
</dbReference>
<dbReference type="GO" id="GO:0160148">
    <property type="term" value="F:tRNA pseudouridine(55) synthase activity"/>
    <property type="evidence" value="ECO:0007669"/>
    <property type="project" value="UniProtKB-EC"/>
</dbReference>
<dbReference type="GO" id="GO:0031119">
    <property type="term" value="P:tRNA pseudouridine synthesis"/>
    <property type="evidence" value="ECO:0007669"/>
    <property type="project" value="UniProtKB-UniRule"/>
</dbReference>
<dbReference type="Gene3D" id="3.30.70.2510">
    <property type="match status" value="1"/>
</dbReference>
<dbReference type="Gene3D" id="3.30.70.3190">
    <property type="match status" value="1"/>
</dbReference>
<dbReference type="HAMAP" id="MF_01893">
    <property type="entry name" value="Pus10_arch"/>
    <property type="match status" value="1"/>
</dbReference>
<dbReference type="InterPro" id="IPR020103">
    <property type="entry name" value="PsdUridine_synth_cat_dom_sf"/>
</dbReference>
<dbReference type="InterPro" id="IPR005912">
    <property type="entry name" value="Pus10"/>
</dbReference>
<dbReference type="InterPro" id="IPR039894">
    <property type="entry name" value="Pus10-like"/>
</dbReference>
<dbReference type="InterPro" id="IPR048741">
    <property type="entry name" value="Pus10-like_C"/>
</dbReference>
<dbReference type="InterPro" id="IPR055174">
    <property type="entry name" value="Pus10_THUMP_arc"/>
</dbReference>
<dbReference type="InterPro" id="IPR004114">
    <property type="entry name" value="THUMP_dom"/>
</dbReference>
<dbReference type="NCBIfam" id="TIGR01213">
    <property type="entry name" value="pseudo_Pus10arc"/>
    <property type="match status" value="1"/>
</dbReference>
<dbReference type="PANTHER" id="PTHR21568">
    <property type="entry name" value="TRNA PSEUDOURIDINE SYNTHASE PUS10"/>
    <property type="match status" value="1"/>
</dbReference>
<dbReference type="PANTHER" id="PTHR21568:SF0">
    <property type="entry name" value="TRNA PSEUDOURIDINE SYNTHASE PUS10"/>
    <property type="match status" value="1"/>
</dbReference>
<dbReference type="Pfam" id="PF21238">
    <property type="entry name" value="Pus10_C"/>
    <property type="match status" value="1"/>
</dbReference>
<dbReference type="Pfam" id="PF22023">
    <property type="entry name" value="Pus10_THUMP_arc"/>
    <property type="match status" value="1"/>
</dbReference>
<dbReference type="SUPFAM" id="SSF55120">
    <property type="entry name" value="Pseudouridine synthase"/>
    <property type="match status" value="1"/>
</dbReference>
<dbReference type="PROSITE" id="PS51165">
    <property type="entry name" value="THUMP"/>
    <property type="match status" value="1"/>
</dbReference>
<name>PUS10_AERPE</name>
<organism>
    <name type="scientific">Aeropyrum pernix (strain ATCC 700893 / DSM 11879 / JCM 9820 / NBRC 100138 / K1)</name>
    <dbReference type="NCBI Taxonomy" id="272557"/>
    <lineage>
        <taxon>Archaea</taxon>
        <taxon>Thermoproteota</taxon>
        <taxon>Thermoprotei</taxon>
        <taxon>Desulfurococcales</taxon>
        <taxon>Desulfurococcaceae</taxon>
        <taxon>Aeropyrum</taxon>
    </lineage>
</organism>
<feature type="chain" id="PRO_0000407381" description="tRNA pseudouridine synthase Pus10">
    <location>
        <begin position="1"/>
        <end position="437"/>
    </location>
</feature>
<feature type="domain" description="THUMP" evidence="1">
    <location>
        <begin position="76"/>
        <end position="198"/>
    </location>
</feature>
<feature type="active site" description="Nucleophile" evidence="1">
    <location>
        <position position="253"/>
    </location>
</feature>
<feature type="binding site" evidence="1">
    <location>
        <position position="321"/>
    </location>
    <ligand>
        <name>substrate</name>
    </ligand>
</feature>
<feature type="binding site" evidence="1">
    <location>
        <position position="394"/>
    </location>
    <ligand>
        <name>substrate</name>
    </ligand>
</feature>
<proteinExistence type="inferred from homology"/>
<sequence>MDSRVLESALRALSRYPLCDRCLGRLFARLGRGWSNRERGEAVKRVLVMELHRRVLEGDEAALKTLVSAAPNIGEVARDVVEHLSPGSYREGGPCAVCGGRLESVIASAVEEGYRLLRAYDIERFVVGVRLERGVAMAEEEVKLAAGAGYGESIKAEIRREVGKLLVSRGGVTVDFDSPEATLMVEFPGGGVDIQVNSLLYKARYWKLARNISQAYWPTPEGPRYFSVEQALWPVLKLTGGERLVVHAAGREDVDARMLGSGRPMIVEVKSPRRRRIPLEELEAAANAGGKGLVRFRFETAAKRAEVALYKEETARVRKVYRALVAVEGGVSEVDVEGLRRALEGAVIMQRTPSRVLHRRPDILRRRRLYSLDCSPLEGAPLMECILEAEGGLYIKELVSGDGGRTRPSFAEVLGREAVCIELDVVWVEHEAPAAPG</sequence>
<accession>Q9YEN2</accession>